<reference key="1">
    <citation type="journal article" date="2002" name="Genome Res.">
        <title>The genome of Methanosarcina acetivorans reveals extensive metabolic and physiological diversity.</title>
        <authorList>
            <person name="Galagan J.E."/>
            <person name="Nusbaum C."/>
            <person name="Roy A."/>
            <person name="Endrizzi M.G."/>
            <person name="Macdonald P."/>
            <person name="FitzHugh W."/>
            <person name="Calvo S."/>
            <person name="Engels R."/>
            <person name="Smirnov S."/>
            <person name="Atnoor D."/>
            <person name="Brown A."/>
            <person name="Allen N."/>
            <person name="Naylor J."/>
            <person name="Stange-Thomann N."/>
            <person name="DeArellano K."/>
            <person name="Johnson R."/>
            <person name="Linton L."/>
            <person name="McEwan P."/>
            <person name="McKernan K."/>
            <person name="Talamas J."/>
            <person name="Tirrell A."/>
            <person name="Ye W."/>
            <person name="Zimmer A."/>
            <person name="Barber R.D."/>
            <person name="Cann I."/>
            <person name="Graham D.E."/>
            <person name="Grahame D.A."/>
            <person name="Guss A.M."/>
            <person name="Hedderich R."/>
            <person name="Ingram-Smith C."/>
            <person name="Kuettner H.C."/>
            <person name="Krzycki J.A."/>
            <person name="Leigh J.A."/>
            <person name="Li W."/>
            <person name="Liu J."/>
            <person name="Mukhopadhyay B."/>
            <person name="Reeve J.N."/>
            <person name="Smith K."/>
            <person name="Springer T.A."/>
            <person name="Umayam L.A."/>
            <person name="White O."/>
            <person name="White R.H."/>
            <person name="de Macario E.C."/>
            <person name="Ferry J.G."/>
            <person name="Jarrell K.F."/>
            <person name="Jing H."/>
            <person name="Macario A.J.L."/>
            <person name="Paulsen I.T."/>
            <person name="Pritchett M."/>
            <person name="Sowers K.R."/>
            <person name="Swanson R.V."/>
            <person name="Zinder S.H."/>
            <person name="Lander E."/>
            <person name="Metcalf W.W."/>
            <person name="Birren B."/>
        </authorList>
    </citation>
    <scope>NUCLEOTIDE SEQUENCE [LARGE SCALE GENOMIC DNA]</scope>
    <source>
        <strain>ATCC 35395 / DSM 2834 / JCM 12185 / C2A</strain>
    </source>
</reference>
<gene>
    <name evidence="1" type="primary">rpl29</name>
    <name type="ordered locus">MA_1079</name>
</gene>
<organism>
    <name type="scientific">Methanosarcina acetivorans (strain ATCC 35395 / DSM 2834 / JCM 12185 / C2A)</name>
    <dbReference type="NCBI Taxonomy" id="188937"/>
    <lineage>
        <taxon>Archaea</taxon>
        <taxon>Methanobacteriati</taxon>
        <taxon>Methanobacteriota</taxon>
        <taxon>Stenosarchaea group</taxon>
        <taxon>Methanomicrobia</taxon>
        <taxon>Methanosarcinales</taxon>
        <taxon>Methanosarcinaceae</taxon>
        <taxon>Methanosarcina</taxon>
    </lineage>
</organism>
<protein>
    <recommendedName>
        <fullName evidence="1">Large ribosomal subunit protein uL29</fullName>
    </recommendedName>
    <alternativeName>
        <fullName evidence="2">50S ribosomal protein L29</fullName>
    </alternativeName>
</protein>
<accession>Q8TRU0</accession>
<proteinExistence type="inferred from homology"/>
<feature type="chain" id="PRO_0000130510" description="Large ribosomal subunit protein uL29">
    <location>
        <begin position="1"/>
        <end position="67"/>
    </location>
</feature>
<evidence type="ECO:0000255" key="1">
    <source>
        <dbReference type="HAMAP-Rule" id="MF_00374"/>
    </source>
</evidence>
<evidence type="ECO:0000305" key="2"/>
<keyword id="KW-1185">Reference proteome</keyword>
<keyword id="KW-0687">Ribonucleoprotein</keyword>
<keyword id="KW-0689">Ribosomal protein</keyword>
<sequence length="67" mass="7612">MAILRTSEIRTMTIEERADELENLNNELVRERALTSAGGAPENPGRIGEIRRTIARIKTIQHELNEI</sequence>
<comment type="similarity">
    <text evidence="1">Belongs to the universal ribosomal protein uL29 family.</text>
</comment>
<dbReference type="EMBL" id="AE010299">
    <property type="protein sequence ID" value="AAM04504.1"/>
    <property type="molecule type" value="Genomic_DNA"/>
</dbReference>
<dbReference type="RefSeq" id="WP_011021108.1">
    <property type="nucleotide sequence ID" value="NC_003552.1"/>
</dbReference>
<dbReference type="SMR" id="Q8TRU0"/>
<dbReference type="FunCoup" id="Q8TRU0">
    <property type="interactions" value="134"/>
</dbReference>
<dbReference type="STRING" id="188937.MA_1079"/>
<dbReference type="EnsemblBacteria" id="AAM04504">
    <property type="protein sequence ID" value="AAM04504"/>
    <property type="gene ID" value="MA_1079"/>
</dbReference>
<dbReference type="GeneID" id="24832550"/>
<dbReference type="KEGG" id="mac:MA_1079"/>
<dbReference type="HOGENOM" id="CLU_158491_2_2_2"/>
<dbReference type="InParanoid" id="Q8TRU0"/>
<dbReference type="OrthoDB" id="11736at2157"/>
<dbReference type="PhylomeDB" id="Q8TRU0"/>
<dbReference type="Proteomes" id="UP000002487">
    <property type="component" value="Chromosome"/>
</dbReference>
<dbReference type="GO" id="GO:1990904">
    <property type="term" value="C:ribonucleoprotein complex"/>
    <property type="evidence" value="ECO:0007669"/>
    <property type="project" value="UniProtKB-KW"/>
</dbReference>
<dbReference type="GO" id="GO:0005840">
    <property type="term" value="C:ribosome"/>
    <property type="evidence" value="ECO:0007669"/>
    <property type="project" value="UniProtKB-KW"/>
</dbReference>
<dbReference type="GO" id="GO:0003735">
    <property type="term" value="F:structural constituent of ribosome"/>
    <property type="evidence" value="ECO:0007669"/>
    <property type="project" value="InterPro"/>
</dbReference>
<dbReference type="GO" id="GO:0006412">
    <property type="term" value="P:translation"/>
    <property type="evidence" value="ECO:0007669"/>
    <property type="project" value="UniProtKB-UniRule"/>
</dbReference>
<dbReference type="CDD" id="cd00427">
    <property type="entry name" value="Ribosomal_L29_HIP"/>
    <property type="match status" value="1"/>
</dbReference>
<dbReference type="Gene3D" id="1.10.287.310">
    <property type="match status" value="1"/>
</dbReference>
<dbReference type="HAMAP" id="MF_00374">
    <property type="entry name" value="Ribosomal_uL29"/>
    <property type="match status" value="1"/>
</dbReference>
<dbReference type="InterPro" id="IPR001854">
    <property type="entry name" value="Ribosomal_uL29"/>
</dbReference>
<dbReference type="InterPro" id="IPR018254">
    <property type="entry name" value="Ribosomal_uL29_CS"/>
</dbReference>
<dbReference type="InterPro" id="IPR036049">
    <property type="entry name" value="Ribosomal_uL29_sf"/>
</dbReference>
<dbReference type="NCBIfam" id="TIGR00012">
    <property type="entry name" value="L29"/>
    <property type="match status" value="1"/>
</dbReference>
<dbReference type="Pfam" id="PF00831">
    <property type="entry name" value="Ribosomal_L29"/>
    <property type="match status" value="1"/>
</dbReference>
<dbReference type="SUPFAM" id="SSF46561">
    <property type="entry name" value="Ribosomal protein L29 (L29p)"/>
    <property type="match status" value="1"/>
</dbReference>
<dbReference type="PROSITE" id="PS00579">
    <property type="entry name" value="RIBOSOMAL_L29"/>
    <property type="match status" value="1"/>
</dbReference>
<name>RL29_METAC</name>